<sequence length="59" mass="6518">MKAFYGVLIIFILISMLDLSQQVFINVKCRGSPECLPKCKEAIGKSAGKCMNGKCKCYP</sequence>
<reference key="1">
    <citation type="journal article" date="2005" name="Toxicon">
        <title>The Brazilian scorpion Tityus costatus Karsch: genes, peptides and function.</title>
        <authorList>
            <person name="Diego-Garcia E."/>
            <person name="Batista C.V.F."/>
            <person name="Garcia-Gomez B.I."/>
            <person name="Lucas S."/>
            <person name="Candido D.M."/>
            <person name="Gomez-Lagunas F."/>
            <person name="Possani L.D."/>
        </authorList>
    </citation>
    <scope>NUCLEOTIDE SEQUENCE [MRNA]</scope>
    <scope>MASS SPECTROMETRY</scope>
    <scope>SUBCELLULAR LOCATION</scope>
    <source>
        <tissue>Venom</tissue>
        <tissue>Venom gland</tissue>
    </source>
</reference>
<reference key="2">
    <citation type="journal article" date="2018" name="Nat. Struct. Mol. Biol.">
        <title>Screening, large-scale production and structure-based classification of cystine-dense peptides.</title>
        <authorList>
            <person name="Correnti C.E."/>
            <person name="Gewe M.M."/>
            <person name="Mehlin C."/>
            <person name="Bandaranayake A.D."/>
            <person name="Johnsen W.A."/>
            <person name="Rupert P.B."/>
            <person name="Brusniak M.Y."/>
            <person name="Clarke M."/>
            <person name="Burke S.E."/>
            <person name="De Van Der Schueren W."/>
            <person name="Pilat K."/>
            <person name="Turnbaugh S.M."/>
            <person name="May D."/>
            <person name="Watson A."/>
            <person name="Chan M.K."/>
            <person name="Bahl C.D."/>
            <person name="Olson J.M."/>
            <person name="Strong R.K."/>
        </authorList>
    </citation>
    <scope>X-RAY CRYSTALLOGRAPHY (1.76 ANGSTROMS) OF 23-59</scope>
    <scope>SYNTHESIS OF 23-59</scope>
    <scope>DISULFIDE BONDS</scope>
</reference>
<organism>
    <name type="scientific">Tityus costatus</name>
    <name type="common">Brazilian scorpion</name>
    <dbReference type="NCBI Taxonomy" id="309814"/>
    <lineage>
        <taxon>Eukaryota</taxon>
        <taxon>Metazoa</taxon>
        <taxon>Ecdysozoa</taxon>
        <taxon>Arthropoda</taxon>
        <taxon>Chelicerata</taxon>
        <taxon>Arachnida</taxon>
        <taxon>Scorpiones</taxon>
        <taxon>Buthida</taxon>
        <taxon>Buthoidea</taxon>
        <taxon>Buthidae</taxon>
        <taxon>Tityus</taxon>
    </lineage>
</organism>
<evidence type="ECO:0000250" key="1"/>
<evidence type="ECO:0000255" key="2"/>
<evidence type="ECO:0000269" key="3">
    <source>
    </source>
</evidence>
<evidence type="ECO:0000269" key="4">
    <source>
    </source>
</evidence>
<evidence type="ECO:0000303" key="5">
    <source>
    </source>
</evidence>
<evidence type="ECO:0000305" key="6"/>
<evidence type="ECO:0000305" key="7">
    <source>
    </source>
</evidence>
<evidence type="ECO:0000312" key="8">
    <source>
        <dbReference type="PDB" id="6ATN"/>
    </source>
</evidence>
<evidence type="ECO:0007829" key="9">
    <source>
        <dbReference type="PDB" id="6ATN"/>
    </source>
</evidence>
<feature type="signal peptide">
    <location>
        <begin position="1"/>
        <end position="22"/>
    </location>
</feature>
<feature type="chain" id="PRO_0000231505" description="Potassium channel toxin alpha-KTx 4.5">
    <location>
        <begin position="23"/>
        <end position="59"/>
    </location>
</feature>
<feature type="region of interest" description="Interaction with Ca(2+)-activated K(+) channels" evidence="2">
    <location>
        <begin position="48"/>
        <end position="55"/>
    </location>
</feature>
<feature type="site" description="Basic residue of the functional dyad" evidence="1">
    <location>
        <position position="49"/>
    </location>
</feature>
<feature type="site" description="Aromatic residue of the functional dyad" evidence="1">
    <location>
        <position position="58"/>
    </location>
</feature>
<feature type="disulfide bond" evidence="4 8">
    <location>
        <begin position="29"/>
        <end position="50"/>
    </location>
</feature>
<feature type="disulfide bond" evidence="4 8">
    <location>
        <begin position="35"/>
        <end position="55"/>
    </location>
</feature>
<feature type="disulfide bond" evidence="4 8">
    <location>
        <begin position="39"/>
        <end position="57"/>
    </location>
</feature>
<feature type="strand" evidence="9">
    <location>
        <begin position="23"/>
        <end position="28"/>
    </location>
</feature>
<feature type="strand" evidence="9">
    <location>
        <begin position="30"/>
        <end position="32"/>
    </location>
</feature>
<feature type="helix" evidence="9">
    <location>
        <begin position="35"/>
        <end position="43"/>
    </location>
</feature>
<feature type="strand" evidence="9">
    <location>
        <begin position="44"/>
        <end position="46"/>
    </location>
</feature>
<feature type="strand" evidence="9">
    <location>
        <begin position="48"/>
        <end position="51"/>
    </location>
</feature>
<feature type="strand" evidence="9">
    <location>
        <begin position="54"/>
        <end position="57"/>
    </location>
</feature>
<comment type="function">
    <text evidence="4">Inhibits with low potency Kv1.1/KCNA1, Kv1.2/KCNA2, Kv1.3/KCNA3 and Kv11.1/KCNH2/ERG1 voltage-gated potassium channels (PubMed:29483648).</text>
</comment>
<comment type="subcellular location">
    <subcellularLocation>
        <location evidence="3">Secreted</location>
    </subcellularLocation>
</comment>
<comment type="tissue specificity">
    <text evidence="7">Expressed by the venom gland.</text>
</comment>
<comment type="domain">
    <text evidence="6">Has the structural arrangement of an alpha-helix connected to antiparallel beta-sheets by disulfide bonds (CS-alpha/beta).</text>
</comment>
<comment type="mass spectrometry" mass="3986.0" method="Electrospray" evidence="3"/>
<comment type="similarity">
    <text evidence="6">Belongs to the short scorpion toxin superfamily. Potassium channel inhibitor family. Alpha-KTx 04 subfamily.</text>
</comment>
<protein>
    <recommendedName>
        <fullName evidence="5">Potassium channel toxin alpha-KTx 4.5</fullName>
    </recommendedName>
</protein>
<dbReference type="EMBL" id="AY740685">
    <property type="protein sequence ID" value="AAW72455.1"/>
    <property type="molecule type" value="mRNA"/>
</dbReference>
<dbReference type="PDB" id="6ATN">
    <property type="method" value="X-ray"/>
    <property type="resolution" value="1.76 A"/>
    <property type="chains" value="A=23-59"/>
</dbReference>
<dbReference type="PDBsum" id="6ATN"/>
<dbReference type="SMR" id="Q5G8B6"/>
<dbReference type="GO" id="GO:0005576">
    <property type="term" value="C:extracellular region"/>
    <property type="evidence" value="ECO:0007669"/>
    <property type="project" value="UniProtKB-SubCell"/>
</dbReference>
<dbReference type="GO" id="GO:0008200">
    <property type="term" value="F:ion channel inhibitor activity"/>
    <property type="evidence" value="ECO:0007669"/>
    <property type="project" value="InterPro"/>
</dbReference>
<dbReference type="GO" id="GO:0015459">
    <property type="term" value="F:potassium channel regulator activity"/>
    <property type="evidence" value="ECO:0007669"/>
    <property type="project" value="UniProtKB-KW"/>
</dbReference>
<dbReference type="GO" id="GO:0090729">
    <property type="term" value="F:toxin activity"/>
    <property type="evidence" value="ECO:0007669"/>
    <property type="project" value="UniProtKB-KW"/>
</dbReference>
<dbReference type="FunFam" id="3.30.30.10:FF:000009">
    <property type="entry name" value="Potassium channel toxin alpha-KTx 4.3"/>
    <property type="match status" value="1"/>
</dbReference>
<dbReference type="Gene3D" id="3.30.30.10">
    <property type="entry name" value="Knottin, scorpion toxin-like"/>
    <property type="match status" value="1"/>
</dbReference>
<dbReference type="InterPro" id="IPR036574">
    <property type="entry name" value="Scorpion_toxin-like_sf"/>
</dbReference>
<dbReference type="InterPro" id="IPR001947">
    <property type="entry name" value="Scorpion_toxinS_K_inh"/>
</dbReference>
<dbReference type="Pfam" id="PF00451">
    <property type="entry name" value="Toxin_2"/>
    <property type="match status" value="1"/>
</dbReference>
<dbReference type="PRINTS" id="PR00286">
    <property type="entry name" value="CHARYBDTOXIN"/>
</dbReference>
<dbReference type="SUPFAM" id="SSF57095">
    <property type="entry name" value="Scorpion toxin-like"/>
    <property type="match status" value="1"/>
</dbReference>
<dbReference type="PROSITE" id="PS01138">
    <property type="entry name" value="SCORP_SHORT_TOXIN"/>
    <property type="match status" value="1"/>
</dbReference>
<keyword id="KW-0002">3D-structure</keyword>
<keyword id="KW-1015">Disulfide bond</keyword>
<keyword id="KW-0872">Ion channel impairing toxin</keyword>
<keyword id="KW-0528">Neurotoxin</keyword>
<keyword id="KW-0632">Potassium channel impairing toxin</keyword>
<keyword id="KW-0964">Secreted</keyword>
<keyword id="KW-0732">Signal</keyword>
<keyword id="KW-0800">Toxin</keyword>
<keyword id="KW-1220">Voltage-gated potassium channel impairing toxin</keyword>
<proteinExistence type="evidence at protein level"/>
<name>KAX45_TITCO</name>
<accession>Q5G8B6</accession>